<keyword id="KW-0025">Alternative splicing</keyword>
<keyword id="KW-0325">Glycoprotein</keyword>
<keyword id="KW-0472">Membrane</keyword>
<keyword id="KW-1185">Reference proteome</keyword>
<keyword id="KW-0812">Transmembrane</keyword>
<keyword id="KW-1133">Transmembrane helix</keyword>
<accession>Q5BPL5</accession>
<accession>Q5XV84</accession>
<proteinExistence type="evidence at transcript level"/>
<evidence type="ECO:0000255" key="1"/>
<evidence type="ECO:0000305" key="2"/>
<protein>
    <recommendedName>
        <fullName>Protein EI24 homolog</fullName>
    </recommendedName>
</protein>
<dbReference type="EMBL" id="AB073164">
    <property type="status" value="NOT_ANNOTATED_CDS"/>
    <property type="molecule type" value="Genomic_DNA"/>
</dbReference>
<dbReference type="EMBL" id="CP002687">
    <property type="protein sequence ID" value="AEE82556.1"/>
    <property type="molecule type" value="Genomic_DNA"/>
</dbReference>
<dbReference type="EMBL" id="AY735638">
    <property type="protein sequence ID" value="AAU44508.1"/>
    <property type="molecule type" value="mRNA"/>
</dbReference>
<dbReference type="EMBL" id="AY924813">
    <property type="protein sequence ID" value="AAX23888.1"/>
    <property type="molecule type" value="mRNA"/>
</dbReference>
<dbReference type="RefSeq" id="NP_849325.4">
    <molecule id="Q5BPL5-1"/>
    <property type="nucleotide sequence ID" value="NM_178994.5"/>
</dbReference>
<dbReference type="FunCoup" id="Q5BPL5">
    <property type="interactions" value="1759"/>
</dbReference>
<dbReference type="STRING" id="3702.Q5BPL5"/>
<dbReference type="TCDB" id="2.A.121.3.3">
    <property type="family name" value="the sulfate transporter (cysz) family"/>
</dbReference>
<dbReference type="GlyGen" id="Q5BPL5">
    <property type="glycosylation" value="1 site"/>
</dbReference>
<dbReference type="PaxDb" id="3702-AT4G06676.1"/>
<dbReference type="ProteomicsDB" id="222260">
    <molecule id="Q5BPL5-1"/>
</dbReference>
<dbReference type="EnsemblPlants" id="AT4G06676.1">
    <molecule id="Q5BPL5-1"/>
    <property type="protein sequence ID" value="AT4G06676.1"/>
    <property type="gene ID" value="AT4G06676"/>
</dbReference>
<dbReference type="GeneID" id="826112"/>
<dbReference type="Gramene" id="AT4G06676.1">
    <molecule id="Q5BPL5-1"/>
    <property type="protein sequence ID" value="AT4G06676.1"/>
    <property type="gene ID" value="AT4G06676"/>
</dbReference>
<dbReference type="KEGG" id="ath:AT4G06676"/>
<dbReference type="Araport" id="AT4G06676"/>
<dbReference type="TAIR" id="AT4G06676"/>
<dbReference type="eggNOG" id="KOG3966">
    <property type="taxonomic scope" value="Eukaryota"/>
</dbReference>
<dbReference type="InParanoid" id="Q5BPL5"/>
<dbReference type="PhylomeDB" id="Q5BPL5"/>
<dbReference type="PRO" id="PR:Q5BPL5"/>
<dbReference type="Proteomes" id="UP000006548">
    <property type="component" value="Chromosome 4"/>
</dbReference>
<dbReference type="ExpressionAtlas" id="Q5BPL5">
    <property type="expression patterns" value="baseline and differential"/>
</dbReference>
<dbReference type="GO" id="GO:0016020">
    <property type="term" value="C:membrane"/>
    <property type="evidence" value="ECO:0007669"/>
    <property type="project" value="UniProtKB-SubCell"/>
</dbReference>
<dbReference type="PANTHER" id="PTHR21389:SF0">
    <property type="entry name" value="ETOPOSIDE-INDUCED PROTEIN 2.4 HOMOLOG"/>
    <property type="match status" value="1"/>
</dbReference>
<dbReference type="PANTHER" id="PTHR21389">
    <property type="entry name" value="P53 INDUCED PROTEIN"/>
    <property type="match status" value="1"/>
</dbReference>
<dbReference type="Pfam" id="PF07264">
    <property type="entry name" value="EI24"/>
    <property type="match status" value="1"/>
</dbReference>
<name>EI24_ARATH</name>
<reference key="1">
    <citation type="journal article" date="2001" name="DNA Res.">
        <title>The size and sequence organization of the centromeric region of Arabidopsis thaliana chromosome 4.</title>
        <authorList>
            <person name="Kumekawa N."/>
            <person name="Hosouchi T."/>
            <person name="Tsuruoka H."/>
            <person name="Kotani H."/>
        </authorList>
    </citation>
    <scope>NUCLEOTIDE SEQUENCE [LARGE SCALE GENOMIC DNA]</scope>
    <source>
        <strain>cv. Columbia</strain>
    </source>
</reference>
<reference key="2">
    <citation type="journal article" date="2017" name="Plant J.">
        <title>Araport11: a complete reannotation of the Arabidopsis thaliana reference genome.</title>
        <authorList>
            <person name="Cheng C.Y."/>
            <person name="Krishnakumar V."/>
            <person name="Chan A.P."/>
            <person name="Thibaud-Nissen F."/>
            <person name="Schobel S."/>
            <person name="Town C.D."/>
        </authorList>
    </citation>
    <scope>GENOME REANNOTATION</scope>
    <source>
        <strain>cv. Columbia</strain>
    </source>
</reference>
<reference key="3">
    <citation type="submission" date="2005-02" db="EMBL/GenBank/DDBJ databases">
        <authorList>
            <person name="Underwood B.A."/>
            <person name="Xiao Y.-L."/>
            <person name="Moskal W.A. Jr."/>
            <person name="Monaghan E.L."/>
            <person name="Wang W."/>
            <person name="Redman J.C."/>
            <person name="Wu H.C."/>
            <person name="Utterback T."/>
            <person name="Town C.D."/>
        </authorList>
    </citation>
    <scope>NUCLEOTIDE SEQUENCE [LARGE SCALE MRNA]</scope>
    <source>
        <strain>cv. Columbia</strain>
    </source>
</reference>
<feature type="chain" id="PRO_0000430419" description="Protein EI24 homolog">
    <location>
        <begin position="1"/>
        <end position="320"/>
    </location>
</feature>
<feature type="transmembrane region" description="Helical; Name=1" evidence="1">
    <location>
        <begin position="41"/>
        <end position="61"/>
    </location>
</feature>
<feature type="transmembrane region" description="Helical; Name=2" evidence="1">
    <location>
        <begin position="94"/>
        <end position="114"/>
    </location>
</feature>
<feature type="transmembrane region" description="Helical; Name=3" evidence="1">
    <location>
        <begin position="175"/>
        <end position="195"/>
    </location>
</feature>
<feature type="transmembrane region" description="Helical; Name=4" evidence="1">
    <location>
        <begin position="227"/>
        <end position="247"/>
    </location>
</feature>
<feature type="transmembrane region" description="Helical; Name=5" evidence="1">
    <location>
        <begin position="248"/>
        <end position="268"/>
    </location>
</feature>
<feature type="transmembrane region" description="Helical; Name=6" evidence="1">
    <location>
        <begin position="292"/>
        <end position="312"/>
    </location>
</feature>
<feature type="glycosylation site" description="N-linked (GlcNAc...) asparagine" evidence="1">
    <location>
        <position position="217"/>
    </location>
</feature>
<feature type="sequence conflict" description="In Ref. 3; AAU44508." evidence="2" ref="3">
    <original>C</original>
    <variation>R</variation>
    <location>
        <position position="42"/>
    </location>
</feature>
<feature type="sequence conflict" description="In Ref. 3; AAU44508." evidence="2" ref="3">
    <original>S</original>
    <variation>G</variation>
    <location>
        <position position="111"/>
    </location>
</feature>
<sequence>MRSKSKQVLLLWLEGFREACSLHRVVILCLRSRKLLLRTGQCFLLNGLIFLGSLGVFKWFIDPSLQWILPDQCSPLTSQEFCSYGGFYAFLRGGLLQLFYVFWFYPLYMLSFILSNIWYNDIAKHGFEAIEISDLNSAEALRQGEALASLNMANAERPSGLGGVMIGIGEQVYSILLLTFFFLEVCVVGVIPYIGKILNFLLLSWMYAYYCYEYKWNFSGISLKKRLDFFQSNWAFFAGFGSPCVLAIFFLSPLVSGALMAILFPLFVLTATGSGPEKLIGAPRRTWKCAGLGKLPIFYIADTLSMLALSIFRLESPHEN</sequence>
<gene>
    <name type="ordered locus">At4g06676</name>
    <name type="ORF">T2N12.19</name>
</gene>
<organism>
    <name type="scientific">Arabidopsis thaliana</name>
    <name type="common">Mouse-ear cress</name>
    <dbReference type="NCBI Taxonomy" id="3702"/>
    <lineage>
        <taxon>Eukaryota</taxon>
        <taxon>Viridiplantae</taxon>
        <taxon>Streptophyta</taxon>
        <taxon>Embryophyta</taxon>
        <taxon>Tracheophyta</taxon>
        <taxon>Spermatophyta</taxon>
        <taxon>Magnoliopsida</taxon>
        <taxon>eudicotyledons</taxon>
        <taxon>Gunneridae</taxon>
        <taxon>Pentapetalae</taxon>
        <taxon>rosids</taxon>
        <taxon>malvids</taxon>
        <taxon>Brassicales</taxon>
        <taxon>Brassicaceae</taxon>
        <taxon>Camelineae</taxon>
        <taxon>Arabidopsis</taxon>
    </lineage>
</organism>
<comment type="subcellular location">
    <subcellularLocation>
        <location evidence="2">Membrane</location>
        <topology evidence="2">Multi-pass membrane protein</topology>
    </subcellularLocation>
</comment>
<comment type="alternative products">
    <event type="alternative splicing"/>
    <isoform>
        <id>Q5BPL5-1</id>
        <name>1</name>
        <sequence type="displayed"/>
    </isoform>
    <text>A number of isoforms are produced. According to EST sequences.</text>
</comment>
<comment type="similarity">
    <text evidence="2">Belongs to the EI24 (TC 9.B.7) family.</text>
</comment>